<accession>Q7V8Z1</accession>
<organism>
    <name type="scientific">Prochlorococcus marinus (strain MIT 9313)</name>
    <dbReference type="NCBI Taxonomy" id="74547"/>
    <lineage>
        <taxon>Bacteria</taxon>
        <taxon>Bacillati</taxon>
        <taxon>Cyanobacteriota</taxon>
        <taxon>Cyanophyceae</taxon>
        <taxon>Synechococcales</taxon>
        <taxon>Prochlorococcaceae</taxon>
        <taxon>Prochlorococcus</taxon>
    </lineage>
</organism>
<keyword id="KW-0046">Antibiotic resistance</keyword>
<keyword id="KW-0997">Cell inner membrane</keyword>
<keyword id="KW-1003">Cell membrane</keyword>
<keyword id="KW-0133">Cell shape</keyword>
<keyword id="KW-0961">Cell wall biogenesis/degradation</keyword>
<keyword id="KW-0378">Hydrolase</keyword>
<keyword id="KW-0472">Membrane</keyword>
<keyword id="KW-0573">Peptidoglycan synthesis</keyword>
<keyword id="KW-1185">Reference proteome</keyword>
<keyword id="KW-0812">Transmembrane</keyword>
<keyword id="KW-1133">Transmembrane helix</keyword>
<protein>
    <recommendedName>
        <fullName evidence="1">Undecaprenyl-diphosphatase</fullName>
        <ecNumber evidence="1">3.6.1.27</ecNumber>
    </recommendedName>
    <alternativeName>
        <fullName evidence="1">Bacitracin resistance protein</fullName>
    </alternativeName>
    <alternativeName>
        <fullName evidence="1">Undecaprenyl pyrophosphate phosphatase</fullName>
    </alternativeName>
</protein>
<sequence>MGAIASMGPLFSLMILLAATSELLAACWRNLVLGVVQGLTEFLPISSTAHLKVVPMLVGWGDPGVSATAVIQLGSILAVIAYFKRDLAEVLKGIALAFKHGQWREPNARLGLAIAIGTMPILLAGMAIKLFWPGYEASSIRSLPSIAVVSIVMALLLALAESFGPRLKQMHLVKGRDGFVVGLAQALALIPGVSRSGSTLTASLFDGWQRQDAARFCFLLGIPAITLAGLVELKDAFAELSLGGVLPLLVGIVSAAFVSWLAIDWLLKYLQSHSTWIFVVYRLLFGVLVLAWWLSGRSN</sequence>
<proteinExistence type="inferred from homology"/>
<evidence type="ECO:0000255" key="1">
    <source>
        <dbReference type="HAMAP-Rule" id="MF_01006"/>
    </source>
</evidence>
<feature type="chain" id="PRO_0000151179" description="Undecaprenyl-diphosphatase">
    <location>
        <begin position="1"/>
        <end position="299"/>
    </location>
</feature>
<feature type="transmembrane region" description="Helical" evidence="1">
    <location>
        <begin position="10"/>
        <end position="32"/>
    </location>
</feature>
<feature type="transmembrane region" description="Helical" evidence="1">
    <location>
        <begin position="63"/>
        <end position="83"/>
    </location>
</feature>
<feature type="transmembrane region" description="Helical" evidence="1">
    <location>
        <begin position="112"/>
        <end position="132"/>
    </location>
</feature>
<feature type="transmembrane region" description="Helical" evidence="1">
    <location>
        <begin position="143"/>
        <end position="163"/>
    </location>
</feature>
<feature type="transmembrane region" description="Helical" evidence="1">
    <location>
        <begin position="178"/>
        <end position="198"/>
    </location>
</feature>
<feature type="transmembrane region" description="Helical" evidence="1">
    <location>
        <begin position="213"/>
        <end position="233"/>
    </location>
</feature>
<feature type="transmembrane region" description="Helical" evidence="1">
    <location>
        <begin position="243"/>
        <end position="263"/>
    </location>
</feature>
<feature type="transmembrane region" description="Helical" evidence="1">
    <location>
        <begin position="276"/>
        <end position="296"/>
    </location>
</feature>
<dbReference type="EC" id="3.6.1.27" evidence="1"/>
<dbReference type="EMBL" id="BX548175">
    <property type="protein sequence ID" value="CAE20355.1"/>
    <property type="molecule type" value="Genomic_DNA"/>
</dbReference>
<dbReference type="SMR" id="Q7V8Z1"/>
<dbReference type="KEGG" id="pmt:PMT_0180"/>
<dbReference type="eggNOG" id="COG1968">
    <property type="taxonomic scope" value="Bacteria"/>
</dbReference>
<dbReference type="HOGENOM" id="CLU_060296_1_0_3"/>
<dbReference type="Proteomes" id="UP000001423">
    <property type="component" value="Chromosome"/>
</dbReference>
<dbReference type="GO" id="GO:0005886">
    <property type="term" value="C:plasma membrane"/>
    <property type="evidence" value="ECO:0007669"/>
    <property type="project" value="UniProtKB-SubCell"/>
</dbReference>
<dbReference type="GO" id="GO:0050380">
    <property type="term" value="F:undecaprenyl-diphosphatase activity"/>
    <property type="evidence" value="ECO:0007669"/>
    <property type="project" value="UniProtKB-UniRule"/>
</dbReference>
<dbReference type="GO" id="GO:0071555">
    <property type="term" value="P:cell wall organization"/>
    <property type="evidence" value="ECO:0007669"/>
    <property type="project" value="UniProtKB-KW"/>
</dbReference>
<dbReference type="GO" id="GO:0009252">
    <property type="term" value="P:peptidoglycan biosynthetic process"/>
    <property type="evidence" value="ECO:0007669"/>
    <property type="project" value="UniProtKB-KW"/>
</dbReference>
<dbReference type="GO" id="GO:0008360">
    <property type="term" value="P:regulation of cell shape"/>
    <property type="evidence" value="ECO:0007669"/>
    <property type="project" value="UniProtKB-KW"/>
</dbReference>
<dbReference type="GO" id="GO:0046677">
    <property type="term" value="P:response to antibiotic"/>
    <property type="evidence" value="ECO:0007669"/>
    <property type="project" value="UniProtKB-UniRule"/>
</dbReference>
<dbReference type="HAMAP" id="MF_01006">
    <property type="entry name" value="Undec_diphosphatase"/>
    <property type="match status" value="1"/>
</dbReference>
<dbReference type="InterPro" id="IPR003824">
    <property type="entry name" value="UppP"/>
</dbReference>
<dbReference type="NCBIfam" id="NF001394">
    <property type="entry name" value="PRK00281.2-5"/>
    <property type="match status" value="1"/>
</dbReference>
<dbReference type="NCBIfam" id="TIGR00753">
    <property type="entry name" value="undec_PP_bacA"/>
    <property type="match status" value="1"/>
</dbReference>
<dbReference type="PANTHER" id="PTHR30622">
    <property type="entry name" value="UNDECAPRENYL-DIPHOSPHATASE"/>
    <property type="match status" value="1"/>
</dbReference>
<dbReference type="PANTHER" id="PTHR30622:SF4">
    <property type="entry name" value="UNDECAPRENYL-DIPHOSPHATASE"/>
    <property type="match status" value="1"/>
</dbReference>
<dbReference type="Pfam" id="PF02673">
    <property type="entry name" value="BacA"/>
    <property type="match status" value="1"/>
</dbReference>
<reference key="1">
    <citation type="journal article" date="2003" name="Nature">
        <title>Genome divergence in two Prochlorococcus ecotypes reflects oceanic niche differentiation.</title>
        <authorList>
            <person name="Rocap G."/>
            <person name="Larimer F.W."/>
            <person name="Lamerdin J.E."/>
            <person name="Malfatti S."/>
            <person name="Chain P."/>
            <person name="Ahlgren N.A."/>
            <person name="Arellano A."/>
            <person name="Coleman M."/>
            <person name="Hauser L."/>
            <person name="Hess W.R."/>
            <person name="Johnson Z.I."/>
            <person name="Land M.L."/>
            <person name="Lindell D."/>
            <person name="Post A.F."/>
            <person name="Regala W."/>
            <person name="Shah M."/>
            <person name="Shaw S.L."/>
            <person name="Steglich C."/>
            <person name="Sullivan M.B."/>
            <person name="Ting C.S."/>
            <person name="Tolonen A."/>
            <person name="Webb E.A."/>
            <person name="Zinser E.R."/>
            <person name="Chisholm S.W."/>
        </authorList>
    </citation>
    <scope>NUCLEOTIDE SEQUENCE [LARGE SCALE GENOMIC DNA]</scope>
    <source>
        <strain>MIT 9313</strain>
    </source>
</reference>
<name>UPPP_PROMM</name>
<gene>
    <name evidence="1" type="primary">uppP</name>
    <name type="synonym">bacA</name>
    <name type="synonym">upk</name>
    <name type="ordered locus">PMT_0180</name>
</gene>
<comment type="function">
    <text evidence="1">Catalyzes the dephosphorylation of undecaprenyl diphosphate (UPP). Confers resistance to bacitracin.</text>
</comment>
<comment type="catalytic activity">
    <reaction evidence="1">
        <text>di-trans,octa-cis-undecaprenyl diphosphate + H2O = di-trans,octa-cis-undecaprenyl phosphate + phosphate + H(+)</text>
        <dbReference type="Rhea" id="RHEA:28094"/>
        <dbReference type="ChEBI" id="CHEBI:15377"/>
        <dbReference type="ChEBI" id="CHEBI:15378"/>
        <dbReference type="ChEBI" id="CHEBI:43474"/>
        <dbReference type="ChEBI" id="CHEBI:58405"/>
        <dbReference type="ChEBI" id="CHEBI:60392"/>
        <dbReference type="EC" id="3.6.1.27"/>
    </reaction>
</comment>
<comment type="subcellular location">
    <subcellularLocation>
        <location evidence="1">Cell inner membrane</location>
        <topology evidence="1">Multi-pass membrane protein</topology>
    </subcellularLocation>
</comment>
<comment type="miscellaneous">
    <text>Bacitracin is thought to be involved in the inhibition of peptidoglycan synthesis by sequestering undecaprenyl diphosphate, thereby reducing the pool of lipid carrier available.</text>
</comment>
<comment type="similarity">
    <text evidence="1">Belongs to the UppP family.</text>
</comment>